<reference key="1">
    <citation type="journal article" date="2004" name="Science">
        <title>The 1.2-megabase genome sequence of Mimivirus.</title>
        <authorList>
            <person name="Raoult D."/>
            <person name="Audic S."/>
            <person name="Robert C."/>
            <person name="Abergel C."/>
            <person name="Renesto P."/>
            <person name="Ogata H."/>
            <person name="La Scola B."/>
            <person name="Susan M."/>
            <person name="Claverie J.-M."/>
        </authorList>
    </citation>
    <scope>NUCLEOTIDE SEQUENCE [LARGE SCALE GENOMIC DNA]</scope>
    <source>
        <strain>Rowbotham-Bradford</strain>
    </source>
</reference>
<protein>
    <recommendedName>
        <fullName>Putative ankyrin repeat protein L289</fullName>
    </recommendedName>
</protein>
<organism>
    <name type="scientific">Acanthamoeba polyphaga mimivirus</name>
    <name type="common">APMV</name>
    <dbReference type="NCBI Taxonomy" id="212035"/>
    <lineage>
        <taxon>Viruses</taxon>
        <taxon>Varidnaviria</taxon>
        <taxon>Bamfordvirae</taxon>
        <taxon>Nucleocytoviricota</taxon>
        <taxon>Megaviricetes</taxon>
        <taxon>Imitervirales</taxon>
        <taxon>Mimiviridae</taxon>
        <taxon>Megamimivirinae</taxon>
        <taxon>Mimivirus</taxon>
        <taxon>Mimivirus bradfordmassiliense</taxon>
    </lineage>
</organism>
<proteinExistence type="predicted"/>
<dbReference type="EMBL" id="AY653733">
    <property type="protein sequence ID" value="AAV50561.1"/>
    <property type="molecule type" value="Genomic_DNA"/>
</dbReference>
<dbReference type="SMR" id="Q5UPX1"/>
<dbReference type="KEGG" id="vg:9924904"/>
<dbReference type="OrthoDB" id="552at549779"/>
<dbReference type="Proteomes" id="UP000001134">
    <property type="component" value="Genome"/>
</dbReference>
<dbReference type="Gene3D" id="1.25.40.20">
    <property type="entry name" value="Ankyrin repeat-containing domain"/>
    <property type="match status" value="4"/>
</dbReference>
<dbReference type="InterPro" id="IPR002110">
    <property type="entry name" value="Ankyrin_rpt"/>
</dbReference>
<dbReference type="InterPro" id="IPR036770">
    <property type="entry name" value="Ankyrin_rpt-contain_sf"/>
</dbReference>
<dbReference type="InterPro" id="IPR050745">
    <property type="entry name" value="Multifunctional_regulatory"/>
</dbReference>
<dbReference type="PANTHER" id="PTHR24189:SF50">
    <property type="entry name" value="ANKYRIN REPEAT AND SOCS BOX PROTEIN 2"/>
    <property type="match status" value="1"/>
</dbReference>
<dbReference type="PANTHER" id="PTHR24189">
    <property type="entry name" value="MYOTROPHIN"/>
    <property type="match status" value="1"/>
</dbReference>
<dbReference type="Pfam" id="PF12796">
    <property type="entry name" value="Ank_2"/>
    <property type="match status" value="3"/>
</dbReference>
<dbReference type="SMART" id="SM00248">
    <property type="entry name" value="ANK"/>
    <property type="match status" value="11"/>
</dbReference>
<dbReference type="SUPFAM" id="SSF48403">
    <property type="entry name" value="Ankyrin repeat"/>
    <property type="match status" value="2"/>
</dbReference>
<dbReference type="PROSITE" id="PS50297">
    <property type="entry name" value="ANK_REP_REGION"/>
    <property type="match status" value="1"/>
</dbReference>
<dbReference type="PROSITE" id="PS50088">
    <property type="entry name" value="ANK_REPEAT"/>
    <property type="match status" value="4"/>
</dbReference>
<keyword id="KW-0040">ANK repeat</keyword>
<keyword id="KW-1185">Reference proteome</keyword>
<keyword id="KW-0677">Repeat</keyword>
<feature type="chain" id="PRO_0000067168" description="Putative ankyrin repeat protein L289">
    <location>
        <begin position="1"/>
        <end position="544"/>
    </location>
</feature>
<feature type="repeat" description="ANK 1">
    <location>
        <begin position="31"/>
        <end position="71"/>
    </location>
</feature>
<feature type="repeat" description="ANK 2">
    <location>
        <begin position="72"/>
        <end position="105"/>
    </location>
</feature>
<feature type="repeat" description="ANK 3">
    <location>
        <begin position="110"/>
        <end position="143"/>
    </location>
</feature>
<feature type="repeat" description="ANK 4">
    <location>
        <begin position="147"/>
        <end position="181"/>
    </location>
</feature>
<feature type="repeat" description="ANK 5">
    <location>
        <begin position="185"/>
        <end position="218"/>
    </location>
</feature>
<feature type="repeat" description="ANK 6">
    <location>
        <begin position="222"/>
        <end position="255"/>
    </location>
</feature>
<feature type="repeat" description="ANK 7">
    <location>
        <begin position="259"/>
        <end position="297"/>
    </location>
</feature>
<feature type="repeat" description="ANK 8">
    <location>
        <begin position="300"/>
        <end position="339"/>
    </location>
</feature>
<feature type="repeat" description="ANK 9">
    <location>
        <begin position="340"/>
        <end position="374"/>
    </location>
</feature>
<feature type="repeat" description="ANK 10">
    <location>
        <begin position="378"/>
        <end position="413"/>
    </location>
</feature>
<feature type="repeat" description="ANK 11">
    <location>
        <begin position="414"/>
        <end position="447"/>
    </location>
</feature>
<accession>Q5UPX1</accession>
<sequence>MTQYISKYSPIDFGEYGYDKSFPYCYNGTCKNFSKLMWLVINEKSNPRIDGHKKIVKHLKKNKRKINAQNEHGWTALMIASILSNDWSSIKTVKLLLKKGADPNIENYNYSQTVLKLAASNVKYASNIKTIKLLIHYGADINHKNLLGVSVLHYCYIDYYTKSDNLEVIKLLLSYGMDINSVTNQGNTLLYIVSKVSQNNNSTETVKFLLENNADPNIPNNKGTTALMVASKYSNSTSNLATVKLLLDYEANINFMNKYNETALSKVVSNFYESNYNKNNFMTLKFLIQKGAIDIPIGIDKLSILMVAVIRTYCSENSDNFTKLIELLLKHFNPNIQCSNGKTVLHYLCNKQVCNFPYVDVINLLLKAGINPNIKDNQGKTALILACDNYCFLKNKEAVRLLCKVSTINTIDNTGQSALDYFLNKYKEKYTNILTIILKYGAYCVNKNNINKIKILKCFDYLNKNNKINKIHEKICDQIKLKAIKHQIRPTSLRMKIISLNWYSRSYQTDKIISWNNLDAIDYLGAIDIDDLRYKISDCTKYID</sequence>
<gene>
    <name type="ordered locus">MIMI_L289</name>
</gene>
<organismHost>
    <name type="scientific">Acanthamoeba polyphaga</name>
    <name type="common">Amoeba</name>
    <dbReference type="NCBI Taxonomy" id="5757"/>
</organismHost>
<name>YL289_MIMIV</name>